<reference key="1">
    <citation type="submission" date="2006-08" db="EMBL/GenBank/DDBJ databases">
        <title>Complete sequence of chromosome 1 of Burkholderia cenocepacia HI2424.</title>
        <authorList>
            <person name="Copeland A."/>
            <person name="Lucas S."/>
            <person name="Lapidus A."/>
            <person name="Barry K."/>
            <person name="Detter J.C."/>
            <person name="Glavina del Rio T."/>
            <person name="Hammon N."/>
            <person name="Israni S."/>
            <person name="Pitluck S."/>
            <person name="Chain P."/>
            <person name="Malfatti S."/>
            <person name="Shin M."/>
            <person name="Vergez L."/>
            <person name="Schmutz J."/>
            <person name="Larimer F."/>
            <person name="Land M."/>
            <person name="Hauser L."/>
            <person name="Kyrpides N."/>
            <person name="Kim E."/>
            <person name="LiPuma J.J."/>
            <person name="Gonzalez C.F."/>
            <person name="Konstantinidis K."/>
            <person name="Tiedje J.M."/>
            <person name="Richardson P."/>
        </authorList>
    </citation>
    <scope>NUCLEOTIDE SEQUENCE [LARGE SCALE GENOMIC DNA]</scope>
    <source>
        <strain>HI2424</strain>
    </source>
</reference>
<feature type="chain" id="PRO_0000321976" description="C4-dicarboxylate transport protein">
    <location>
        <begin position="1"/>
        <end position="430"/>
    </location>
</feature>
<feature type="transmembrane region" description="Helical" evidence="1">
    <location>
        <begin position="9"/>
        <end position="29"/>
    </location>
</feature>
<feature type="transmembrane region" description="Helical" evidence="1">
    <location>
        <begin position="45"/>
        <end position="65"/>
    </location>
</feature>
<feature type="transmembrane region" description="Helical" evidence="1">
    <location>
        <begin position="79"/>
        <end position="99"/>
    </location>
</feature>
<feature type="transmembrane region" description="Helical" evidence="1">
    <location>
        <begin position="149"/>
        <end position="169"/>
    </location>
</feature>
<feature type="transmembrane region" description="Helical" evidence="1">
    <location>
        <begin position="185"/>
        <end position="205"/>
    </location>
</feature>
<feature type="transmembrane region" description="Helical" evidence="1">
    <location>
        <begin position="223"/>
        <end position="243"/>
    </location>
</feature>
<feature type="transmembrane region" description="Helical" evidence="1">
    <location>
        <begin position="308"/>
        <end position="328"/>
    </location>
</feature>
<feature type="transmembrane region" description="Helical" evidence="1">
    <location>
        <begin position="356"/>
        <end position="376"/>
    </location>
</feature>
<accession>A0KAU6</accession>
<organism>
    <name type="scientific">Burkholderia cenocepacia (strain HI2424)</name>
    <dbReference type="NCBI Taxonomy" id="331272"/>
    <lineage>
        <taxon>Bacteria</taxon>
        <taxon>Pseudomonadati</taxon>
        <taxon>Pseudomonadota</taxon>
        <taxon>Betaproteobacteria</taxon>
        <taxon>Burkholderiales</taxon>
        <taxon>Burkholderiaceae</taxon>
        <taxon>Burkholderia</taxon>
        <taxon>Burkholderia cepacia complex</taxon>
    </lineage>
</organism>
<dbReference type="EMBL" id="CP000458">
    <property type="protein sequence ID" value="ABK09623.1"/>
    <property type="molecule type" value="Genomic_DNA"/>
</dbReference>
<dbReference type="RefSeq" id="WP_011546291.1">
    <property type="nucleotide sequence ID" value="NC_008542.1"/>
</dbReference>
<dbReference type="SMR" id="A0KAU6"/>
<dbReference type="KEGG" id="bch:Bcen2424_2873"/>
<dbReference type="HOGENOM" id="CLU_019375_7_0_4"/>
<dbReference type="GO" id="GO:0005886">
    <property type="term" value="C:plasma membrane"/>
    <property type="evidence" value="ECO:0007669"/>
    <property type="project" value="UniProtKB-SubCell"/>
</dbReference>
<dbReference type="GO" id="GO:0015138">
    <property type="term" value="F:fumarate transmembrane transporter activity"/>
    <property type="evidence" value="ECO:0007669"/>
    <property type="project" value="TreeGrafter"/>
</dbReference>
<dbReference type="GO" id="GO:0015366">
    <property type="term" value="F:malate:proton symporter activity"/>
    <property type="evidence" value="ECO:0007669"/>
    <property type="project" value="TreeGrafter"/>
</dbReference>
<dbReference type="GO" id="GO:0015141">
    <property type="term" value="F:succinate transmembrane transporter activity"/>
    <property type="evidence" value="ECO:0007669"/>
    <property type="project" value="TreeGrafter"/>
</dbReference>
<dbReference type="GO" id="GO:0070778">
    <property type="term" value="P:L-aspartate transmembrane transport"/>
    <property type="evidence" value="ECO:0007669"/>
    <property type="project" value="TreeGrafter"/>
</dbReference>
<dbReference type="FunFam" id="1.10.3860.10:FF:000001">
    <property type="entry name" value="C4-dicarboxylate transport protein"/>
    <property type="match status" value="1"/>
</dbReference>
<dbReference type="Gene3D" id="1.10.3860.10">
    <property type="entry name" value="Sodium:dicarboxylate symporter"/>
    <property type="match status" value="1"/>
</dbReference>
<dbReference type="HAMAP" id="MF_01300">
    <property type="entry name" value="C4_dicarb_transport"/>
    <property type="match status" value="1"/>
</dbReference>
<dbReference type="InterPro" id="IPR023954">
    <property type="entry name" value="C4_dicarb_transport"/>
</dbReference>
<dbReference type="InterPro" id="IPR001991">
    <property type="entry name" value="Na-dicarboxylate_symporter"/>
</dbReference>
<dbReference type="InterPro" id="IPR018107">
    <property type="entry name" value="Na-dicarboxylate_symporter_CS"/>
</dbReference>
<dbReference type="InterPro" id="IPR036458">
    <property type="entry name" value="Na:dicarbo_symporter_sf"/>
</dbReference>
<dbReference type="NCBIfam" id="NF002461">
    <property type="entry name" value="PRK01663.1"/>
    <property type="match status" value="1"/>
</dbReference>
<dbReference type="NCBIfam" id="NF009587">
    <property type="entry name" value="PRK13027.1"/>
    <property type="match status" value="1"/>
</dbReference>
<dbReference type="PANTHER" id="PTHR42865:SF1">
    <property type="entry name" value="AEROBIC C4-DICARBOXYLATE TRANSPORT PROTEIN"/>
    <property type="match status" value="1"/>
</dbReference>
<dbReference type="PANTHER" id="PTHR42865">
    <property type="entry name" value="PROTON/GLUTAMATE-ASPARTATE SYMPORTER"/>
    <property type="match status" value="1"/>
</dbReference>
<dbReference type="Pfam" id="PF00375">
    <property type="entry name" value="SDF"/>
    <property type="match status" value="1"/>
</dbReference>
<dbReference type="PRINTS" id="PR00173">
    <property type="entry name" value="EDTRNSPORT"/>
</dbReference>
<dbReference type="SUPFAM" id="SSF118215">
    <property type="entry name" value="Proton glutamate symport protein"/>
    <property type="match status" value="1"/>
</dbReference>
<dbReference type="PROSITE" id="PS00713">
    <property type="entry name" value="NA_DICARBOXYL_SYMP_1"/>
    <property type="match status" value="1"/>
</dbReference>
<dbReference type="PROSITE" id="PS00714">
    <property type="entry name" value="NA_DICARBOXYL_SYMP_2"/>
    <property type="match status" value="1"/>
</dbReference>
<keyword id="KW-0997">Cell inner membrane</keyword>
<keyword id="KW-1003">Cell membrane</keyword>
<keyword id="KW-0472">Membrane</keyword>
<keyword id="KW-0769">Symport</keyword>
<keyword id="KW-0812">Transmembrane</keyword>
<keyword id="KW-1133">Transmembrane helix</keyword>
<keyword id="KW-0813">Transport</keyword>
<name>DCTA_BURCH</name>
<evidence type="ECO:0000255" key="1">
    <source>
        <dbReference type="HAMAP-Rule" id="MF_01300"/>
    </source>
</evidence>
<gene>
    <name evidence="1" type="primary">dctA</name>
    <name type="ordered locus">Bcen2424_2873</name>
</gene>
<comment type="function">
    <text evidence="1">Responsible for the transport of dicarboxylates such as succinate, fumarate, and malate from the periplasm across the membrane.</text>
</comment>
<comment type="subcellular location">
    <subcellularLocation>
        <location evidence="1">Cell inner membrane</location>
        <topology evidence="1">Multi-pass membrane protein</topology>
    </subcellularLocation>
</comment>
<comment type="similarity">
    <text evidence="1">Belongs to the dicarboxylate/amino acid:cation symporter (DAACS) (TC 2.A.23) family.</text>
</comment>
<proteinExistence type="inferred from homology"/>
<sequence length="430" mass="45607">MKKKPFYKVLYVQVIFAIIVGVILGHFYPSIATDMKPLGDGFIKLIKMVIGPIIFCTVVTGIAGMEDMKKVGRVGGKALLYFEIVSTFALLLGLAATHLLRPGVGFNIDPATLDGKAVASYAAKAHGQSTVDFLMHIIPNTMVDAFAQGEILQILLIALLFGSVLAHLGERGKVVTDFIDGLTRVLFGIVHIVTKLAPIGAFGAMAFTIGKYGVGSLVPLLKLIGTFYLTSVVFVLVVLGAIARFTGFSIIRFVSYIKEELLIVLGTSSSEAALPQLMEKLEKAGCSRSVVGLVVPTGYSFNLDGTNIYMTMAVLFIAQATNIELTWMQQLTLLAVAMLTSKGASGVTGAGFITLAATLAVVPTIPLSGMVLILGIDRFMSECRALTNIVGNGVATVVVSAWEKELDRNKLRQALKGGGEVAPTETTAGV</sequence>
<protein>
    <recommendedName>
        <fullName evidence="1">C4-dicarboxylate transport protein</fullName>
    </recommendedName>
</protein>